<keyword id="KW-0903">Direct protein sequencing</keyword>
<keyword id="KW-0406">Ion transport</keyword>
<keyword id="KW-0472">Membrane</keyword>
<keyword id="KW-0496">Mitochondrion</keyword>
<keyword id="KW-1000">Mitochondrion outer membrane</keyword>
<keyword id="KW-0626">Porin</keyword>
<keyword id="KW-1185">Reference proteome</keyword>
<keyword id="KW-0812">Transmembrane</keyword>
<keyword id="KW-1134">Transmembrane beta strand</keyword>
<keyword id="KW-0813">Transport</keyword>
<feature type="initiator methionine" description="Removed" evidence="2">
    <location>
        <position position="1"/>
    </location>
</feature>
<feature type="chain" id="PRO_0000050531" description="Mitochondrial outer membrane protein porin of 34 kDa">
    <location>
        <begin position="2"/>
        <end position="276"/>
    </location>
</feature>
<reference key="1">
    <citation type="journal article" date="1994" name="J. Biol. Chem.">
        <title>Biochemical, molecular, and functional characterization of porin isoforms from potato mitochondria.</title>
        <authorList>
            <person name="Heins L."/>
            <person name="Mentzel H."/>
            <person name="Schmid A."/>
            <person name="Benz R."/>
            <person name="Schmitz U.K."/>
        </authorList>
    </citation>
    <scope>NUCLEOTIDE SEQUENCE [MRNA]</scope>
    <scope>PROTEIN SEQUENCE OF 2-24</scope>
    <source>
        <strain>cv. Bintje</strain>
        <tissue>Tuber</tissue>
    </source>
</reference>
<reference key="2">
    <citation type="journal article" date="2011" name="Nature">
        <title>Genome sequence and analysis of the tuber crop potato.</title>
        <authorList>
            <consortium name="The Potato Genome Sequencing Consortium"/>
        </authorList>
    </citation>
    <scope>NUCLEOTIDE SEQUENCE [LARGE SCALE GENOMIC DNA]</scope>
    <source>
        <strain>cv. DM1-3 516 R44</strain>
    </source>
</reference>
<proteinExistence type="evidence at protein level"/>
<evidence type="ECO:0000250" key="1"/>
<evidence type="ECO:0000269" key="2">
    <source>
    </source>
</evidence>
<evidence type="ECO:0000305" key="3"/>
<comment type="function">
    <text evidence="1">Forms a channel through the cell membrane that allows diffusion of small hydrophilic molecules. The channel adopts an open conformation at low or zero membrane potential and a closed conformation at potentials above 30-40 mV. The open state has a weak anion selectivity whereas the closed state is cation-selective (By similarity).</text>
</comment>
<comment type="subcellular location">
    <subcellularLocation>
        <location>Mitochondrion outer membrane</location>
    </subcellularLocation>
</comment>
<comment type="domain">
    <text>Consists mainly of membrane-spanning sided beta-sheets.</text>
</comment>
<comment type="similarity">
    <text evidence="3">Belongs to the eukaryotic mitochondrial porin (TC 1.B.8.1) family.</text>
</comment>
<name>VDAC1_SOLTU</name>
<dbReference type="EMBL" id="X80386">
    <property type="protein sequence ID" value="CAA56599.1"/>
    <property type="molecule type" value="mRNA"/>
</dbReference>
<dbReference type="PIR" id="A55364">
    <property type="entry name" value="A55364"/>
</dbReference>
<dbReference type="PIR" id="S46936">
    <property type="entry name" value="S46936"/>
</dbReference>
<dbReference type="RefSeq" id="NP_001275154.1">
    <property type="nucleotide sequence ID" value="NM_001288225.1"/>
</dbReference>
<dbReference type="SMR" id="P42055"/>
<dbReference type="FunCoup" id="P42055">
    <property type="interactions" value="2609"/>
</dbReference>
<dbReference type="IntAct" id="P42055">
    <property type="interactions" value="1"/>
</dbReference>
<dbReference type="STRING" id="4113.P42055"/>
<dbReference type="CarbonylDB" id="P42055"/>
<dbReference type="PaxDb" id="4113-PGSC0003DMT400017754"/>
<dbReference type="EnsemblPlants" id="PGSC0003DMT400017754">
    <property type="protein sequence ID" value="PGSC0003DMT400017754"/>
    <property type="gene ID" value="PGSC0003DMG400006896"/>
</dbReference>
<dbReference type="EnsemblPlants" id="RHC02H1G1010.2.1">
    <property type="protein sequence ID" value="RHC02H1G1010.2.1"/>
    <property type="gene ID" value="RHC02H1G1010.2"/>
</dbReference>
<dbReference type="GeneID" id="102580103"/>
<dbReference type="Gramene" id="PGSC0003DMT400017754">
    <property type="protein sequence ID" value="PGSC0003DMT400017754"/>
    <property type="gene ID" value="PGSC0003DMG400006896"/>
</dbReference>
<dbReference type="Gramene" id="RHC02H1G1010.2.1">
    <property type="protein sequence ID" value="RHC02H1G1010.2.1"/>
    <property type="gene ID" value="RHC02H1G1010.2"/>
</dbReference>
<dbReference type="KEGG" id="sot:102580103"/>
<dbReference type="eggNOG" id="KOG3126">
    <property type="taxonomic scope" value="Eukaryota"/>
</dbReference>
<dbReference type="HOGENOM" id="CLU_069937_0_0_1"/>
<dbReference type="InParanoid" id="P42055"/>
<dbReference type="OMA" id="DGMFVPH"/>
<dbReference type="OrthoDB" id="7827681at2759"/>
<dbReference type="Proteomes" id="UP000011115">
    <property type="component" value="Unassembled WGS sequence"/>
</dbReference>
<dbReference type="GO" id="GO:0005741">
    <property type="term" value="C:mitochondrial outer membrane"/>
    <property type="evidence" value="ECO:0000318"/>
    <property type="project" value="GO_Central"/>
</dbReference>
<dbReference type="GO" id="GO:0046930">
    <property type="term" value="C:pore complex"/>
    <property type="evidence" value="ECO:0007669"/>
    <property type="project" value="UniProtKB-KW"/>
</dbReference>
<dbReference type="GO" id="GO:0015288">
    <property type="term" value="F:porin activity"/>
    <property type="evidence" value="ECO:0007669"/>
    <property type="project" value="UniProtKB-KW"/>
</dbReference>
<dbReference type="GO" id="GO:0008308">
    <property type="term" value="F:voltage-gated monoatomic anion channel activity"/>
    <property type="evidence" value="ECO:0000318"/>
    <property type="project" value="GO_Central"/>
</dbReference>
<dbReference type="CDD" id="cd07306">
    <property type="entry name" value="Porin3_VDAC"/>
    <property type="match status" value="1"/>
</dbReference>
<dbReference type="FunFam" id="2.40.160.10:FF:000003">
    <property type="entry name" value="Outer mitochondrial membrane protein porin"/>
    <property type="match status" value="1"/>
</dbReference>
<dbReference type="Gene3D" id="2.40.160.10">
    <property type="entry name" value="Porin"/>
    <property type="match status" value="1"/>
</dbReference>
<dbReference type="InterPro" id="IPR023614">
    <property type="entry name" value="Porin_dom_sf"/>
</dbReference>
<dbReference type="InterPro" id="IPR001925">
    <property type="entry name" value="Porin_Euk"/>
</dbReference>
<dbReference type="InterPro" id="IPR027246">
    <property type="entry name" value="Porin_Euk/Tom40"/>
</dbReference>
<dbReference type="PANTHER" id="PTHR11743:SF56">
    <property type="entry name" value="MITOCHONDRIAL OUTER MEMBRANE PROTEIN PORIN OF 34 KDA"/>
    <property type="match status" value="1"/>
</dbReference>
<dbReference type="PANTHER" id="PTHR11743">
    <property type="entry name" value="VOLTAGE-DEPENDENT ANION-SELECTIVE CHANNEL"/>
    <property type="match status" value="1"/>
</dbReference>
<dbReference type="Pfam" id="PF01459">
    <property type="entry name" value="Porin_3"/>
    <property type="match status" value="1"/>
</dbReference>
<dbReference type="PROSITE" id="PS00558">
    <property type="entry name" value="EUKARYOTIC_PORIN"/>
    <property type="match status" value="1"/>
</dbReference>
<accession>P42055</accession>
<organism>
    <name type="scientific">Solanum tuberosum</name>
    <name type="common">Potato</name>
    <dbReference type="NCBI Taxonomy" id="4113"/>
    <lineage>
        <taxon>Eukaryota</taxon>
        <taxon>Viridiplantae</taxon>
        <taxon>Streptophyta</taxon>
        <taxon>Embryophyta</taxon>
        <taxon>Tracheophyta</taxon>
        <taxon>Spermatophyta</taxon>
        <taxon>Magnoliopsida</taxon>
        <taxon>eudicotyledons</taxon>
        <taxon>Gunneridae</taxon>
        <taxon>Pentapetalae</taxon>
        <taxon>asterids</taxon>
        <taxon>lamiids</taxon>
        <taxon>Solanales</taxon>
        <taxon>Solanaceae</taxon>
        <taxon>Solanoideae</taxon>
        <taxon>Solaneae</taxon>
        <taxon>Solanum</taxon>
    </lineage>
</organism>
<sequence length="276" mass="29573">MGKGPGLYTEIGKKARDLLYKDYQSDHKFSITTYSPTGVVITSSGSKKGDLFLADVNTQLKNKNVTTDIKVDTNSNLFTTITVDEAAPGLKTILSFRVPDQRSGKLEVQYLHDYAGICTSVGLTANPIVNFSGVVGTNIIALGTDVSFDTKTGDFTKCNAGLSFTNADLVASLNLNNKGDNLTASYYHTVSPLTSTAVGAEVNHSFSTNENIITVGTQHRLDPLTSVKARINNFGKASALLQHEWRPKSLFTVSGEVDTKSVDKGAKFGLALALKP</sequence>
<protein>
    <recommendedName>
        <fullName>Mitochondrial outer membrane protein porin of 34 kDa</fullName>
    </recommendedName>
    <alternativeName>
        <fullName>POM 34</fullName>
    </alternativeName>
    <alternativeName>
        <fullName>Voltage-dependent anion-selective channel protein</fullName>
        <shortName>VDAC</shortName>
    </alternativeName>
</protein>